<gene>
    <name type="primary">RPI3</name>
    <name type="synonym">EMB3119</name>
    <name type="ordered locus">At3g04790</name>
    <name type="ORF">F7O18.28</name>
    <name type="ORF">T9J14.26</name>
</gene>
<protein>
    <recommendedName>
        <fullName>Probable ribose-5-phosphate isomerase 3, chloroplastic</fullName>
        <ecNumber>5.3.1.6</ecNumber>
    </recommendedName>
    <alternativeName>
        <fullName>Phosphoriboisomerase 3</fullName>
    </alternativeName>
    <alternativeName>
        <fullName>Protein EMBRYO DEFECTIVE 3119</fullName>
    </alternativeName>
</protein>
<organism>
    <name type="scientific">Arabidopsis thaliana</name>
    <name type="common">Mouse-ear cress</name>
    <dbReference type="NCBI Taxonomy" id="3702"/>
    <lineage>
        <taxon>Eukaryota</taxon>
        <taxon>Viridiplantae</taxon>
        <taxon>Streptophyta</taxon>
        <taxon>Embryophyta</taxon>
        <taxon>Tracheophyta</taxon>
        <taxon>Spermatophyta</taxon>
        <taxon>Magnoliopsida</taxon>
        <taxon>eudicotyledons</taxon>
        <taxon>Gunneridae</taxon>
        <taxon>Pentapetalae</taxon>
        <taxon>rosids</taxon>
        <taxon>malvids</taxon>
        <taxon>Brassicales</taxon>
        <taxon>Brassicaceae</taxon>
        <taxon>Camelineae</taxon>
        <taxon>Arabidopsis</taxon>
    </lineage>
</organism>
<dbReference type="EC" id="5.3.1.6"/>
<dbReference type="EMBL" id="AC009465">
    <property type="protein sequence ID" value="AAG51427.1"/>
    <property type="molecule type" value="Genomic_DNA"/>
</dbReference>
<dbReference type="EMBL" id="AC011437">
    <property type="protein sequence ID" value="AAF04905.1"/>
    <property type="molecule type" value="Genomic_DNA"/>
</dbReference>
<dbReference type="EMBL" id="CP002686">
    <property type="protein sequence ID" value="AEE74136.1"/>
    <property type="molecule type" value="Genomic_DNA"/>
</dbReference>
<dbReference type="EMBL" id="AY045785">
    <property type="protein sequence ID" value="AAK76459.1"/>
    <property type="molecule type" value="mRNA"/>
</dbReference>
<dbReference type="EMBL" id="AY142600">
    <property type="protein sequence ID" value="AAN13169.1"/>
    <property type="molecule type" value="mRNA"/>
</dbReference>
<dbReference type="EMBL" id="AY088382">
    <property type="protein sequence ID" value="AAM65920.1"/>
    <property type="molecule type" value="mRNA"/>
</dbReference>
<dbReference type="RefSeq" id="NP_187130.1">
    <property type="nucleotide sequence ID" value="NM_111351.4"/>
</dbReference>
<dbReference type="SMR" id="Q9S726"/>
<dbReference type="BioGRID" id="4974">
    <property type="interactions" value="2"/>
</dbReference>
<dbReference type="FunCoup" id="Q9S726">
    <property type="interactions" value="4041"/>
</dbReference>
<dbReference type="IntAct" id="Q9S726">
    <property type="interactions" value="2"/>
</dbReference>
<dbReference type="MINT" id="Q9S726"/>
<dbReference type="STRING" id="3702.Q9S726"/>
<dbReference type="iPTMnet" id="Q9S726"/>
<dbReference type="MetOSite" id="Q9S726"/>
<dbReference type="PaxDb" id="3702-AT3G04790.1"/>
<dbReference type="ProMEX" id="Q9S726"/>
<dbReference type="ProteomicsDB" id="227955"/>
<dbReference type="EnsemblPlants" id="AT3G04790.1">
    <property type="protein sequence ID" value="AT3G04790.1"/>
    <property type="gene ID" value="AT3G04790"/>
</dbReference>
<dbReference type="GeneID" id="819639"/>
<dbReference type="Gramene" id="AT3G04790.1">
    <property type="protein sequence ID" value="AT3G04790.1"/>
    <property type="gene ID" value="AT3G04790"/>
</dbReference>
<dbReference type="KEGG" id="ath:AT3G04790"/>
<dbReference type="Araport" id="AT3G04790"/>
<dbReference type="TAIR" id="AT3G04790">
    <property type="gene designation" value="EMB3119"/>
</dbReference>
<dbReference type="eggNOG" id="KOG3075">
    <property type="taxonomic scope" value="Eukaryota"/>
</dbReference>
<dbReference type="HOGENOM" id="CLU_056590_1_2_1"/>
<dbReference type="InParanoid" id="Q9S726"/>
<dbReference type="OMA" id="ACHVQEK"/>
<dbReference type="PhylomeDB" id="Q9S726"/>
<dbReference type="BioCyc" id="ARA:AT3G04790-MONOMER"/>
<dbReference type="UniPathway" id="UPA00115">
    <property type="reaction ID" value="UER00412"/>
</dbReference>
<dbReference type="CD-CODE" id="4299E36E">
    <property type="entry name" value="Nucleolus"/>
</dbReference>
<dbReference type="PRO" id="PR:Q9S726"/>
<dbReference type="Proteomes" id="UP000006548">
    <property type="component" value="Chromosome 3"/>
</dbReference>
<dbReference type="ExpressionAtlas" id="Q9S726">
    <property type="expression patterns" value="baseline and differential"/>
</dbReference>
<dbReference type="GO" id="GO:0009507">
    <property type="term" value="C:chloroplast"/>
    <property type="evidence" value="ECO:0007005"/>
    <property type="project" value="TAIR"/>
</dbReference>
<dbReference type="GO" id="GO:0009941">
    <property type="term" value="C:chloroplast envelope"/>
    <property type="evidence" value="ECO:0007005"/>
    <property type="project" value="TAIR"/>
</dbReference>
<dbReference type="GO" id="GO:0009570">
    <property type="term" value="C:chloroplast stroma"/>
    <property type="evidence" value="ECO:0007005"/>
    <property type="project" value="TAIR"/>
</dbReference>
<dbReference type="GO" id="GO:0009535">
    <property type="term" value="C:chloroplast thylakoid membrane"/>
    <property type="evidence" value="ECO:0007005"/>
    <property type="project" value="TAIR"/>
</dbReference>
<dbReference type="GO" id="GO:0005829">
    <property type="term" value="C:cytosol"/>
    <property type="evidence" value="ECO:0007005"/>
    <property type="project" value="TAIR"/>
</dbReference>
<dbReference type="GO" id="GO:0009579">
    <property type="term" value="C:thylakoid"/>
    <property type="evidence" value="ECO:0007005"/>
    <property type="project" value="TAIR"/>
</dbReference>
<dbReference type="GO" id="GO:0004751">
    <property type="term" value="F:ribose-5-phosphate isomerase activity"/>
    <property type="evidence" value="ECO:0007669"/>
    <property type="project" value="UniProtKB-EC"/>
</dbReference>
<dbReference type="GO" id="GO:0009052">
    <property type="term" value="P:pentose-phosphate shunt, non-oxidative branch"/>
    <property type="evidence" value="ECO:0007669"/>
    <property type="project" value="InterPro"/>
</dbReference>
<dbReference type="GO" id="GO:0019253">
    <property type="term" value="P:reductive pentose-phosphate cycle"/>
    <property type="evidence" value="ECO:0000303"/>
    <property type="project" value="TAIR"/>
</dbReference>
<dbReference type="CDD" id="cd01398">
    <property type="entry name" value="RPI_A"/>
    <property type="match status" value="1"/>
</dbReference>
<dbReference type="FunFam" id="3.30.70.260:FF:000069">
    <property type="entry name" value="Ribose-5-phosphate isomerase A"/>
    <property type="match status" value="1"/>
</dbReference>
<dbReference type="FunFam" id="3.40.50.1360:FF:000001">
    <property type="entry name" value="Ribose-5-phosphate isomerase A"/>
    <property type="match status" value="1"/>
</dbReference>
<dbReference type="Gene3D" id="3.30.70.260">
    <property type="match status" value="1"/>
</dbReference>
<dbReference type="Gene3D" id="3.40.50.1360">
    <property type="match status" value="1"/>
</dbReference>
<dbReference type="HAMAP" id="MF_00170">
    <property type="entry name" value="Rib_5P_isom_A"/>
    <property type="match status" value="1"/>
</dbReference>
<dbReference type="InterPro" id="IPR037171">
    <property type="entry name" value="NagB/RpiA_transferase-like"/>
</dbReference>
<dbReference type="InterPro" id="IPR050262">
    <property type="entry name" value="Ribose-5P_isomerase"/>
</dbReference>
<dbReference type="InterPro" id="IPR020672">
    <property type="entry name" value="Ribose5P_isomerase_typA_subgr"/>
</dbReference>
<dbReference type="InterPro" id="IPR004788">
    <property type="entry name" value="Ribose5P_isomerase_type_A"/>
</dbReference>
<dbReference type="NCBIfam" id="NF001924">
    <property type="entry name" value="PRK00702.1"/>
    <property type="match status" value="1"/>
</dbReference>
<dbReference type="NCBIfam" id="TIGR00021">
    <property type="entry name" value="rpiA"/>
    <property type="match status" value="1"/>
</dbReference>
<dbReference type="PANTHER" id="PTHR43748">
    <property type="entry name" value="RIBOSE-5-PHOSPHATE ISOMERASE 3, CHLOROPLASTIC-RELATED"/>
    <property type="match status" value="1"/>
</dbReference>
<dbReference type="PANTHER" id="PTHR43748:SF3">
    <property type="entry name" value="RIBOSE-5-PHOSPHATE ISOMERASE 3, CHLOROPLASTIC-RELATED"/>
    <property type="match status" value="1"/>
</dbReference>
<dbReference type="Pfam" id="PF06026">
    <property type="entry name" value="Rib_5-P_isom_A"/>
    <property type="match status" value="1"/>
</dbReference>
<dbReference type="SUPFAM" id="SSF75445">
    <property type="entry name" value="D-ribose-5-phosphate isomerase (RpiA), lid domain"/>
    <property type="match status" value="1"/>
</dbReference>
<dbReference type="SUPFAM" id="SSF100950">
    <property type="entry name" value="NagB/RpiA/CoA transferase-like"/>
    <property type="match status" value="1"/>
</dbReference>
<comment type="function">
    <text evidence="1">Catalyzes the reversible conversion of ribose-5-phosphate to ribulose 5-phosphate.</text>
</comment>
<comment type="catalytic activity">
    <reaction>
        <text>aldehydo-D-ribose 5-phosphate = D-ribulose 5-phosphate</text>
        <dbReference type="Rhea" id="RHEA:14657"/>
        <dbReference type="ChEBI" id="CHEBI:58121"/>
        <dbReference type="ChEBI" id="CHEBI:58273"/>
        <dbReference type="EC" id="5.3.1.6"/>
    </reaction>
</comment>
<comment type="pathway">
    <text>Carbohydrate degradation; pentose phosphate pathway; D-ribose 5-phosphate from D-ribulose 5-phosphate (non-oxidative stage): step 1/1.</text>
</comment>
<comment type="subcellular location">
    <subcellularLocation>
        <location evidence="3">Plastid</location>
        <location evidence="3">Chloroplast</location>
    </subcellularLocation>
</comment>
<comment type="PTM">
    <text evidence="2">Phosphorylated by SRK2C.</text>
</comment>
<comment type="similarity">
    <text evidence="3">Belongs to the ribose 5-phosphate isomerase family.</text>
</comment>
<evidence type="ECO:0000250" key="1"/>
<evidence type="ECO:0000269" key="2">
    <source>
    </source>
</evidence>
<evidence type="ECO:0000305" key="3"/>
<evidence type="ECO:0007744" key="4">
    <source>
    </source>
</evidence>
<evidence type="ECO:0007744" key="5">
    <source>
    </source>
</evidence>
<proteinExistence type="evidence at protein level"/>
<accession>Q9S726</accession>
<accession>Q8L9K5</accession>
<name>RPI3_ARATH</name>
<reference key="1">
    <citation type="journal article" date="2000" name="Nature">
        <title>Sequence and analysis of chromosome 3 of the plant Arabidopsis thaliana.</title>
        <authorList>
            <person name="Salanoubat M."/>
            <person name="Lemcke K."/>
            <person name="Rieger M."/>
            <person name="Ansorge W."/>
            <person name="Unseld M."/>
            <person name="Fartmann B."/>
            <person name="Valle G."/>
            <person name="Bloecker H."/>
            <person name="Perez-Alonso M."/>
            <person name="Obermaier B."/>
            <person name="Delseny M."/>
            <person name="Boutry M."/>
            <person name="Grivell L.A."/>
            <person name="Mache R."/>
            <person name="Puigdomenech P."/>
            <person name="De Simone V."/>
            <person name="Choisne N."/>
            <person name="Artiguenave F."/>
            <person name="Robert C."/>
            <person name="Brottier P."/>
            <person name="Wincker P."/>
            <person name="Cattolico L."/>
            <person name="Weissenbach J."/>
            <person name="Saurin W."/>
            <person name="Quetier F."/>
            <person name="Schaefer M."/>
            <person name="Mueller-Auer S."/>
            <person name="Gabel C."/>
            <person name="Fuchs M."/>
            <person name="Benes V."/>
            <person name="Wurmbach E."/>
            <person name="Drzonek H."/>
            <person name="Erfle H."/>
            <person name="Jordan N."/>
            <person name="Bangert S."/>
            <person name="Wiedelmann R."/>
            <person name="Kranz H."/>
            <person name="Voss H."/>
            <person name="Holland R."/>
            <person name="Brandt P."/>
            <person name="Nyakatura G."/>
            <person name="Vezzi A."/>
            <person name="D'Angelo M."/>
            <person name="Pallavicini A."/>
            <person name="Toppo S."/>
            <person name="Simionati B."/>
            <person name="Conrad A."/>
            <person name="Hornischer K."/>
            <person name="Kauer G."/>
            <person name="Loehnert T.-H."/>
            <person name="Nordsiek G."/>
            <person name="Reichelt J."/>
            <person name="Scharfe M."/>
            <person name="Schoen O."/>
            <person name="Bargues M."/>
            <person name="Terol J."/>
            <person name="Climent J."/>
            <person name="Navarro P."/>
            <person name="Collado C."/>
            <person name="Perez-Perez A."/>
            <person name="Ottenwaelder B."/>
            <person name="Duchemin D."/>
            <person name="Cooke R."/>
            <person name="Laudie M."/>
            <person name="Berger-Llauro C."/>
            <person name="Purnelle B."/>
            <person name="Masuy D."/>
            <person name="de Haan M."/>
            <person name="Maarse A.C."/>
            <person name="Alcaraz J.-P."/>
            <person name="Cottet A."/>
            <person name="Casacuberta E."/>
            <person name="Monfort A."/>
            <person name="Argiriou A."/>
            <person name="Flores M."/>
            <person name="Liguori R."/>
            <person name="Vitale D."/>
            <person name="Mannhaupt G."/>
            <person name="Haase D."/>
            <person name="Schoof H."/>
            <person name="Rudd S."/>
            <person name="Zaccaria P."/>
            <person name="Mewes H.-W."/>
            <person name="Mayer K.F.X."/>
            <person name="Kaul S."/>
            <person name="Town C.D."/>
            <person name="Koo H.L."/>
            <person name="Tallon L.J."/>
            <person name="Jenkins J."/>
            <person name="Rooney T."/>
            <person name="Rizzo M."/>
            <person name="Walts A."/>
            <person name="Utterback T."/>
            <person name="Fujii C.Y."/>
            <person name="Shea T.P."/>
            <person name="Creasy T.H."/>
            <person name="Haas B."/>
            <person name="Maiti R."/>
            <person name="Wu D."/>
            <person name="Peterson J."/>
            <person name="Van Aken S."/>
            <person name="Pai G."/>
            <person name="Militscher J."/>
            <person name="Sellers P."/>
            <person name="Gill J.E."/>
            <person name="Feldblyum T.V."/>
            <person name="Preuss D."/>
            <person name="Lin X."/>
            <person name="Nierman W.C."/>
            <person name="Salzberg S.L."/>
            <person name="White O."/>
            <person name="Venter J.C."/>
            <person name="Fraser C.M."/>
            <person name="Kaneko T."/>
            <person name="Nakamura Y."/>
            <person name="Sato S."/>
            <person name="Kato T."/>
            <person name="Asamizu E."/>
            <person name="Sasamoto S."/>
            <person name="Kimura T."/>
            <person name="Idesawa K."/>
            <person name="Kawashima K."/>
            <person name="Kishida Y."/>
            <person name="Kiyokawa C."/>
            <person name="Kohara M."/>
            <person name="Matsumoto M."/>
            <person name="Matsuno A."/>
            <person name="Muraki A."/>
            <person name="Nakayama S."/>
            <person name="Nakazaki N."/>
            <person name="Shinpo S."/>
            <person name="Takeuchi C."/>
            <person name="Wada T."/>
            <person name="Watanabe A."/>
            <person name="Yamada M."/>
            <person name="Yasuda M."/>
            <person name="Tabata S."/>
        </authorList>
    </citation>
    <scope>NUCLEOTIDE SEQUENCE [LARGE SCALE GENOMIC DNA]</scope>
    <source>
        <strain>cv. Columbia</strain>
    </source>
</reference>
<reference key="2">
    <citation type="journal article" date="2017" name="Plant J.">
        <title>Araport11: a complete reannotation of the Arabidopsis thaliana reference genome.</title>
        <authorList>
            <person name="Cheng C.Y."/>
            <person name="Krishnakumar V."/>
            <person name="Chan A.P."/>
            <person name="Thibaud-Nissen F."/>
            <person name="Schobel S."/>
            <person name="Town C.D."/>
        </authorList>
    </citation>
    <scope>GENOME REANNOTATION</scope>
    <source>
        <strain>cv. Columbia</strain>
    </source>
</reference>
<reference key="3">
    <citation type="journal article" date="2003" name="Science">
        <title>Empirical analysis of transcriptional activity in the Arabidopsis genome.</title>
        <authorList>
            <person name="Yamada K."/>
            <person name="Lim J."/>
            <person name="Dale J.M."/>
            <person name="Chen H."/>
            <person name="Shinn P."/>
            <person name="Palm C.J."/>
            <person name="Southwick A.M."/>
            <person name="Wu H.C."/>
            <person name="Kim C.J."/>
            <person name="Nguyen M."/>
            <person name="Pham P.K."/>
            <person name="Cheuk R.F."/>
            <person name="Karlin-Newmann G."/>
            <person name="Liu S.X."/>
            <person name="Lam B."/>
            <person name="Sakano H."/>
            <person name="Wu T."/>
            <person name="Yu G."/>
            <person name="Miranda M."/>
            <person name="Quach H.L."/>
            <person name="Tripp M."/>
            <person name="Chang C.H."/>
            <person name="Lee J.M."/>
            <person name="Toriumi M.J."/>
            <person name="Chan M.M."/>
            <person name="Tang C.C."/>
            <person name="Onodera C.S."/>
            <person name="Deng J.M."/>
            <person name="Akiyama K."/>
            <person name="Ansari Y."/>
            <person name="Arakawa T."/>
            <person name="Banh J."/>
            <person name="Banno F."/>
            <person name="Bowser L."/>
            <person name="Brooks S.Y."/>
            <person name="Carninci P."/>
            <person name="Chao Q."/>
            <person name="Choy N."/>
            <person name="Enju A."/>
            <person name="Goldsmith A.D."/>
            <person name="Gurjal M."/>
            <person name="Hansen N.F."/>
            <person name="Hayashizaki Y."/>
            <person name="Johnson-Hopson C."/>
            <person name="Hsuan V.W."/>
            <person name="Iida K."/>
            <person name="Karnes M."/>
            <person name="Khan S."/>
            <person name="Koesema E."/>
            <person name="Ishida J."/>
            <person name="Jiang P.X."/>
            <person name="Jones T."/>
            <person name="Kawai J."/>
            <person name="Kamiya A."/>
            <person name="Meyers C."/>
            <person name="Nakajima M."/>
            <person name="Narusaka M."/>
            <person name="Seki M."/>
            <person name="Sakurai T."/>
            <person name="Satou M."/>
            <person name="Tamse R."/>
            <person name="Vaysberg M."/>
            <person name="Wallender E.K."/>
            <person name="Wong C."/>
            <person name="Yamamura Y."/>
            <person name="Yuan S."/>
            <person name="Shinozaki K."/>
            <person name="Davis R.W."/>
            <person name="Theologis A."/>
            <person name="Ecker J.R."/>
        </authorList>
    </citation>
    <scope>NUCLEOTIDE SEQUENCE [LARGE SCALE MRNA]</scope>
    <source>
        <strain>cv. Columbia</strain>
    </source>
</reference>
<reference key="4">
    <citation type="submission" date="2002-03" db="EMBL/GenBank/DDBJ databases">
        <title>Full-length cDNA from Arabidopsis thaliana.</title>
        <authorList>
            <person name="Brover V.V."/>
            <person name="Troukhan M.E."/>
            <person name="Alexandrov N.A."/>
            <person name="Lu Y.-P."/>
            <person name="Flavell R.B."/>
            <person name="Feldmann K.A."/>
        </authorList>
    </citation>
    <scope>NUCLEOTIDE SEQUENCE [LARGE SCALE MRNA]</scope>
</reference>
<reference key="5">
    <citation type="journal article" date="2007" name="Proc. Natl. Acad. Sci. U.S.A.">
        <title>Phosphoproteomic identification of targets of the Arabidopsis sucrose nonfermenting-like kinase SnRK2.8 reveals a connection to metabolic processes.</title>
        <authorList>
            <person name="Shin R."/>
            <person name="Alvarez S."/>
            <person name="Burch A.Y."/>
            <person name="Jez J.M."/>
            <person name="Schachtman D.P."/>
        </authorList>
    </citation>
    <scope>IDENTIFICATION BY MASS SPECTROMETRY</scope>
    <scope>PHOSPHORYLATION</scope>
</reference>
<reference key="6">
    <citation type="journal article" date="2012" name="J. Proteome Res.">
        <title>Identification of phosphoproteins in Arabidopsis thaliana leaves using polyethylene glycol fractionation, immobilized metal-ion affinity chromatography, two-dimensional gel electrophoresis and mass spectrometry.</title>
        <authorList>
            <person name="Aryal U.K."/>
            <person name="Krochko J.E."/>
            <person name="Ross A.R."/>
        </authorList>
    </citation>
    <scope>PHOSPHORYLATION [LARGE SCALE ANALYSIS] AT SER-108</scope>
    <scope>IDENTIFICATION BY MASS SPECTROMETRY [LARGE SCALE ANALYSIS]</scope>
</reference>
<reference key="7">
    <citation type="journal article" date="2012" name="Mol. Cell. Proteomics">
        <title>Comparative large-scale characterisation of plant vs. mammal proteins reveals similar and idiosyncratic N-alpha acetylation features.</title>
        <authorList>
            <person name="Bienvenut W.V."/>
            <person name="Sumpton D."/>
            <person name="Martinez A."/>
            <person name="Lilla S."/>
            <person name="Espagne C."/>
            <person name="Meinnel T."/>
            <person name="Giglione C."/>
        </authorList>
    </citation>
    <scope>ACETYLATION [LARGE SCALE ANALYSIS] AT SER-40</scope>
    <scope>CLEAVAGE OF TRANSIT PEPTIDE [LARGE SCALE ANALYSIS] AFTER GLN-39</scope>
    <scope>IDENTIFICATION BY MASS SPECTROMETRY [LARGE SCALE ANALYSIS]</scope>
</reference>
<feature type="transit peptide" description="Chloroplast" evidence="5">
    <location>
        <begin position="1"/>
        <end position="39"/>
    </location>
</feature>
<feature type="chain" id="PRO_0000425980" description="Probable ribose-5-phosphate isomerase 3, chloroplastic">
    <location>
        <begin position="40"/>
        <end position="276"/>
    </location>
</feature>
<feature type="modified residue" description="N-acetylserine" evidence="5">
    <location>
        <position position="40"/>
    </location>
</feature>
<feature type="modified residue" description="Phosphoserine" evidence="4">
    <location>
        <position position="108"/>
    </location>
</feature>
<feature type="sequence conflict" description="In Ref. 4; AAM65920." evidence="3" ref="4">
    <original>D</original>
    <variation>E</variation>
    <location>
        <position position="197"/>
    </location>
</feature>
<keyword id="KW-0007">Acetylation</keyword>
<keyword id="KW-0150">Chloroplast</keyword>
<keyword id="KW-0413">Isomerase</keyword>
<keyword id="KW-0597">Phosphoprotein</keyword>
<keyword id="KW-0934">Plastid</keyword>
<keyword id="KW-1185">Reference proteome</keyword>
<keyword id="KW-0809">Transit peptide</keyword>
<sequence length="276" mass="29306">MASLSFVSSSHLTLRTPSIALRSTGSSPRTSVSFSVKAQSVALSQDDLKKLAAEKAVEAIKPGMVLGLGTGSTAAFAVDQIGKLLSSGELYDIVGIPTSKRTEEQARSLGIPLVGLDTHPRIDLAIDGADEVDPNLDLVKGRGGALLREKMVEAVADKFIVVADDTKLVTGLGGSGLAMPVEVVQFCWNFNLIRLQDLFKEFGCESKLRVDGDGKPYVTDNSNYIIDLYFKTPLKDGFAAAKEIGKFQGVVEHGLFLGMATSVIIAGKNGVEVMTK</sequence>